<feature type="chain" id="PRO_0000147290" description="Probable dihydroorotase">
    <location>
        <begin position="1"/>
        <end position="337"/>
    </location>
</feature>
<feature type="binding site" evidence="1">
    <location>
        <position position="12"/>
    </location>
    <ligand>
        <name>Zn(2+)</name>
        <dbReference type="ChEBI" id="CHEBI:29105"/>
        <label>1</label>
    </ligand>
</feature>
<feature type="binding site" evidence="1">
    <location>
        <position position="14"/>
    </location>
    <ligand>
        <name>Zn(2+)</name>
        <dbReference type="ChEBI" id="CHEBI:29105"/>
        <label>1</label>
    </ligand>
</feature>
<feature type="binding site" description="via carbamate group" evidence="1">
    <location>
        <position position="95"/>
    </location>
    <ligand>
        <name>Zn(2+)</name>
        <dbReference type="ChEBI" id="CHEBI:29105"/>
        <label>1</label>
    </ligand>
</feature>
<feature type="binding site" description="via carbamate group" evidence="1">
    <location>
        <position position="95"/>
    </location>
    <ligand>
        <name>Zn(2+)</name>
        <dbReference type="ChEBI" id="CHEBI:29105"/>
        <label>2</label>
    </ligand>
</feature>
<feature type="binding site" evidence="1">
    <location>
        <position position="132"/>
    </location>
    <ligand>
        <name>Zn(2+)</name>
        <dbReference type="ChEBI" id="CHEBI:29105"/>
        <label>2</label>
    </ligand>
</feature>
<feature type="binding site" evidence="1">
    <location>
        <position position="170"/>
    </location>
    <ligand>
        <name>Zn(2+)</name>
        <dbReference type="ChEBI" id="CHEBI:29105"/>
        <label>2</label>
    </ligand>
</feature>
<feature type="binding site" evidence="1">
    <location>
        <position position="240"/>
    </location>
    <ligand>
        <name>Zn(2+)</name>
        <dbReference type="ChEBI" id="CHEBI:29105"/>
        <label>1</label>
    </ligand>
</feature>
<feature type="modified residue" description="N6-carboxylysine" evidence="1">
    <location>
        <position position="95"/>
    </location>
</feature>
<gene>
    <name type="primary">ura2</name>
    <name type="ORF">SPAC16.03c</name>
</gene>
<keyword id="KW-0378">Hydrolase</keyword>
<keyword id="KW-0479">Metal-binding</keyword>
<keyword id="KW-0665">Pyrimidine biosynthesis</keyword>
<keyword id="KW-1185">Reference proteome</keyword>
<keyword id="KW-0862">Zinc</keyword>
<organism>
    <name type="scientific">Schizosaccharomyces pombe (strain 972 / ATCC 24843)</name>
    <name type="common">Fission yeast</name>
    <dbReference type="NCBI Taxonomy" id="284812"/>
    <lineage>
        <taxon>Eukaryota</taxon>
        <taxon>Fungi</taxon>
        <taxon>Dikarya</taxon>
        <taxon>Ascomycota</taxon>
        <taxon>Taphrinomycotina</taxon>
        <taxon>Schizosaccharomycetes</taxon>
        <taxon>Schizosaccharomycetales</taxon>
        <taxon>Schizosaccharomycetaceae</taxon>
        <taxon>Schizosaccharomyces</taxon>
    </lineage>
</organism>
<name>PYRC_SCHPO</name>
<evidence type="ECO:0000250" key="1">
    <source>
        <dbReference type="UniProtKB" id="P05020"/>
    </source>
</evidence>
<evidence type="ECO:0000305" key="2"/>
<sequence>MSLKIPGLADMHVHLRQDNMLKAVVPTVAEGGVSVAYVMPNLIPPITTVDACLQYKKEIEQLDSKTTYLMSLYLSPETTPEVIYEAAKKGIRGVKSYPKGATTNSESGVESYEPFYPTFAAMQETGMILNIHGEVPPSKDNTVFTAEPKFLPTLLDLHQRFPKLKIVLEHCTTADAVEAVKACGESVAGTITAHHLYLTQKDWQDDPYCFCKPVAKTERDRRALIEAATSKNPKFFFGSDSAPHPRSSKLKTPPAAGVFTQPFAASYLAEVFDKEGRLDALKDFACIFGRKFYCIPLDFKESNIVLKKESFRVPESVANDLVPFHPNEVLQWHCSWE</sequence>
<protein>
    <recommendedName>
        <fullName>Probable dihydroorotase</fullName>
        <shortName>DHOase</shortName>
        <ecNumber>3.5.2.3</ecNumber>
    </recommendedName>
</protein>
<accession>Q9UTI0</accession>
<dbReference type="EC" id="3.5.2.3"/>
<dbReference type="EMBL" id="CU329670">
    <property type="protein sequence ID" value="CAB57401.1"/>
    <property type="molecule type" value="Genomic_DNA"/>
</dbReference>
<dbReference type="PIR" id="T37731">
    <property type="entry name" value="T37731"/>
</dbReference>
<dbReference type="RefSeq" id="NP_594571.1">
    <property type="nucleotide sequence ID" value="NM_001020000.2"/>
</dbReference>
<dbReference type="SMR" id="Q9UTI0"/>
<dbReference type="BioGRID" id="279195">
    <property type="interactions" value="1"/>
</dbReference>
<dbReference type="FunCoup" id="Q9UTI0">
    <property type="interactions" value="396"/>
</dbReference>
<dbReference type="STRING" id="284812.Q9UTI0"/>
<dbReference type="PaxDb" id="4896-SPAC16.03c.1"/>
<dbReference type="EnsemblFungi" id="SPAC16.03c.1">
    <property type="protein sequence ID" value="SPAC16.03c.1:pep"/>
    <property type="gene ID" value="SPAC16.03c"/>
</dbReference>
<dbReference type="GeneID" id="2542745"/>
<dbReference type="KEGG" id="spo:2542745"/>
<dbReference type="PomBase" id="SPAC16.03c">
    <property type="gene designation" value="ura2"/>
</dbReference>
<dbReference type="VEuPathDB" id="FungiDB:SPAC16.03c"/>
<dbReference type="eggNOG" id="KOG2902">
    <property type="taxonomic scope" value="Eukaryota"/>
</dbReference>
<dbReference type="HOGENOM" id="CLU_041558_0_0_1"/>
<dbReference type="InParanoid" id="Q9UTI0"/>
<dbReference type="OMA" id="TLHHISM"/>
<dbReference type="PhylomeDB" id="Q9UTI0"/>
<dbReference type="UniPathway" id="UPA00070">
    <property type="reaction ID" value="UER00117"/>
</dbReference>
<dbReference type="PRO" id="PR:Q9UTI0"/>
<dbReference type="Proteomes" id="UP000002485">
    <property type="component" value="Chromosome I"/>
</dbReference>
<dbReference type="GO" id="GO:0005737">
    <property type="term" value="C:cytoplasm"/>
    <property type="evidence" value="ECO:0000318"/>
    <property type="project" value="GO_Central"/>
</dbReference>
<dbReference type="GO" id="GO:0005634">
    <property type="term" value="C:nucleus"/>
    <property type="evidence" value="ECO:0000266"/>
    <property type="project" value="PomBase"/>
</dbReference>
<dbReference type="GO" id="GO:0004151">
    <property type="term" value="F:dihydroorotase activity"/>
    <property type="evidence" value="ECO:0000318"/>
    <property type="project" value="GO_Central"/>
</dbReference>
<dbReference type="GO" id="GO:0046872">
    <property type="term" value="F:metal ion binding"/>
    <property type="evidence" value="ECO:0007669"/>
    <property type="project" value="UniProtKB-KW"/>
</dbReference>
<dbReference type="GO" id="GO:0006207">
    <property type="term" value="P:'de novo' pyrimidine nucleobase biosynthetic process"/>
    <property type="evidence" value="ECO:0000318"/>
    <property type="project" value="GO_Central"/>
</dbReference>
<dbReference type="GO" id="GO:0044205">
    <property type="term" value="P:'de novo' UMP biosynthetic process"/>
    <property type="evidence" value="ECO:0007669"/>
    <property type="project" value="UniProtKB-UniPathway"/>
</dbReference>
<dbReference type="GO" id="GO:0006221">
    <property type="term" value="P:pyrimidine nucleotide biosynthetic process"/>
    <property type="evidence" value="ECO:0000318"/>
    <property type="project" value="GO_Central"/>
</dbReference>
<dbReference type="CDD" id="cd01294">
    <property type="entry name" value="DHOase"/>
    <property type="match status" value="1"/>
</dbReference>
<dbReference type="FunFam" id="3.20.20.140:FF:000041">
    <property type="entry name" value="Dihydroorotase, variant"/>
    <property type="match status" value="1"/>
</dbReference>
<dbReference type="Gene3D" id="3.20.20.140">
    <property type="entry name" value="Metal-dependent hydrolases"/>
    <property type="match status" value="1"/>
</dbReference>
<dbReference type="HAMAP" id="MF_00219">
    <property type="entry name" value="PyrC_classII"/>
    <property type="match status" value="1"/>
</dbReference>
<dbReference type="InterPro" id="IPR006680">
    <property type="entry name" value="Amidohydro-rel"/>
</dbReference>
<dbReference type="InterPro" id="IPR004721">
    <property type="entry name" value="DHOdimr"/>
</dbReference>
<dbReference type="InterPro" id="IPR002195">
    <property type="entry name" value="Dihydroorotase_CS"/>
</dbReference>
<dbReference type="InterPro" id="IPR032466">
    <property type="entry name" value="Metal_Hydrolase"/>
</dbReference>
<dbReference type="NCBIfam" id="TIGR00856">
    <property type="entry name" value="pyrC_dimer"/>
    <property type="match status" value="1"/>
</dbReference>
<dbReference type="PANTHER" id="PTHR43137">
    <property type="entry name" value="DIHYDROOROTASE"/>
    <property type="match status" value="1"/>
</dbReference>
<dbReference type="PANTHER" id="PTHR43137:SF1">
    <property type="entry name" value="DIHYDROOROTASE"/>
    <property type="match status" value="1"/>
</dbReference>
<dbReference type="Pfam" id="PF01979">
    <property type="entry name" value="Amidohydro_1"/>
    <property type="match status" value="1"/>
</dbReference>
<dbReference type="PIRSF" id="PIRSF001237">
    <property type="entry name" value="DHOdimr"/>
    <property type="match status" value="1"/>
</dbReference>
<dbReference type="SUPFAM" id="SSF51556">
    <property type="entry name" value="Metallo-dependent hydrolases"/>
    <property type="match status" value="1"/>
</dbReference>
<dbReference type="PROSITE" id="PS00483">
    <property type="entry name" value="DIHYDROOROTASE_2"/>
    <property type="match status" value="1"/>
</dbReference>
<reference key="1">
    <citation type="journal article" date="2002" name="Nature">
        <title>The genome sequence of Schizosaccharomyces pombe.</title>
        <authorList>
            <person name="Wood V."/>
            <person name="Gwilliam R."/>
            <person name="Rajandream M.A."/>
            <person name="Lyne M.H."/>
            <person name="Lyne R."/>
            <person name="Stewart A."/>
            <person name="Sgouros J.G."/>
            <person name="Peat N."/>
            <person name="Hayles J."/>
            <person name="Baker S.G."/>
            <person name="Basham D."/>
            <person name="Bowman S."/>
            <person name="Brooks K."/>
            <person name="Brown D."/>
            <person name="Brown S."/>
            <person name="Chillingworth T."/>
            <person name="Churcher C.M."/>
            <person name="Collins M."/>
            <person name="Connor R."/>
            <person name="Cronin A."/>
            <person name="Davis P."/>
            <person name="Feltwell T."/>
            <person name="Fraser A."/>
            <person name="Gentles S."/>
            <person name="Goble A."/>
            <person name="Hamlin N."/>
            <person name="Harris D.E."/>
            <person name="Hidalgo J."/>
            <person name="Hodgson G."/>
            <person name="Holroyd S."/>
            <person name="Hornsby T."/>
            <person name="Howarth S."/>
            <person name="Huckle E.J."/>
            <person name="Hunt S."/>
            <person name="Jagels K."/>
            <person name="James K.D."/>
            <person name="Jones L."/>
            <person name="Jones M."/>
            <person name="Leather S."/>
            <person name="McDonald S."/>
            <person name="McLean J."/>
            <person name="Mooney P."/>
            <person name="Moule S."/>
            <person name="Mungall K.L."/>
            <person name="Murphy L.D."/>
            <person name="Niblett D."/>
            <person name="Odell C."/>
            <person name="Oliver K."/>
            <person name="O'Neil S."/>
            <person name="Pearson D."/>
            <person name="Quail M.A."/>
            <person name="Rabbinowitsch E."/>
            <person name="Rutherford K.M."/>
            <person name="Rutter S."/>
            <person name="Saunders D."/>
            <person name="Seeger K."/>
            <person name="Sharp S."/>
            <person name="Skelton J."/>
            <person name="Simmonds M.N."/>
            <person name="Squares R."/>
            <person name="Squares S."/>
            <person name="Stevens K."/>
            <person name="Taylor K."/>
            <person name="Taylor R.G."/>
            <person name="Tivey A."/>
            <person name="Walsh S.V."/>
            <person name="Warren T."/>
            <person name="Whitehead S."/>
            <person name="Woodward J.R."/>
            <person name="Volckaert G."/>
            <person name="Aert R."/>
            <person name="Robben J."/>
            <person name="Grymonprez B."/>
            <person name="Weltjens I."/>
            <person name="Vanstreels E."/>
            <person name="Rieger M."/>
            <person name="Schaefer M."/>
            <person name="Mueller-Auer S."/>
            <person name="Gabel C."/>
            <person name="Fuchs M."/>
            <person name="Duesterhoeft A."/>
            <person name="Fritzc C."/>
            <person name="Holzer E."/>
            <person name="Moestl D."/>
            <person name="Hilbert H."/>
            <person name="Borzym K."/>
            <person name="Langer I."/>
            <person name="Beck A."/>
            <person name="Lehrach H."/>
            <person name="Reinhardt R."/>
            <person name="Pohl T.M."/>
            <person name="Eger P."/>
            <person name="Zimmermann W."/>
            <person name="Wedler H."/>
            <person name="Wambutt R."/>
            <person name="Purnelle B."/>
            <person name="Goffeau A."/>
            <person name="Cadieu E."/>
            <person name="Dreano S."/>
            <person name="Gloux S."/>
            <person name="Lelaure V."/>
            <person name="Mottier S."/>
            <person name="Galibert F."/>
            <person name="Aves S.J."/>
            <person name="Xiang Z."/>
            <person name="Hunt C."/>
            <person name="Moore K."/>
            <person name="Hurst S.M."/>
            <person name="Lucas M."/>
            <person name="Rochet M."/>
            <person name="Gaillardin C."/>
            <person name="Tallada V.A."/>
            <person name="Garzon A."/>
            <person name="Thode G."/>
            <person name="Daga R.R."/>
            <person name="Cruzado L."/>
            <person name="Jimenez J."/>
            <person name="Sanchez M."/>
            <person name="del Rey F."/>
            <person name="Benito J."/>
            <person name="Dominguez A."/>
            <person name="Revuelta J.L."/>
            <person name="Moreno S."/>
            <person name="Armstrong J."/>
            <person name="Forsburg S.L."/>
            <person name="Cerutti L."/>
            <person name="Lowe T."/>
            <person name="McCombie W.R."/>
            <person name="Paulsen I."/>
            <person name="Potashkin J."/>
            <person name="Shpakovski G.V."/>
            <person name="Ussery D."/>
            <person name="Barrell B.G."/>
            <person name="Nurse P."/>
        </authorList>
    </citation>
    <scope>NUCLEOTIDE SEQUENCE [LARGE SCALE GENOMIC DNA]</scope>
    <source>
        <strain>972 / ATCC 24843</strain>
    </source>
</reference>
<comment type="catalytic activity">
    <reaction>
        <text>(S)-dihydroorotate + H2O = N-carbamoyl-L-aspartate + H(+)</text>
        <dbReference type="Rhea" id="RHEA:24296"/>
        <dbReference type="ChEBI" id="CHEBI:15377"/>
        <dbReference type="ChEBI" id="CHEBI:15378"/>
        <dbReference type="ChEBI" id="CHEBI:30864"/>
        <dbReference type="ChEBI" id="CHEBI:32814"/>
        <dbReference type="EC" id="3.5.2.3"/>
    </reaction>
</comment>
<comment type="cofactor">
    <cofactor evidence="1">
        <name>Zn(2+)</name>
        <dbReference type="ChEBI" id="CHEBI:29105"/>
    </cofactor>
    <text evidence="1">Binds 2 Zn(2+) ions per subunit.</text>
</comment>
<comment type="pathway">
    <text>Pyrimidine metabolism; UMP biosynthesis via de novo pathway; (S)-dihydroorotate from bicarbonate: step 3/3.</text>
</comment>
<comment type="similarity">
    <text evidence="2">Belongs to the metallo-dependent hydrolases superfamily. DHOase family. Class II DHOase subfamily.</text>
</comment>
<proteinExistence type="inferred from homology"/>